<protein>
    <recommendedName>
        <fullName evidence="1">D-(-)-3-hydroxybutyrate oligomer hydrolase</fullName>
        <shortName evidence="1">3HB-oligomer hydrolase</shortName>
        <shortName evidence="1">3HBOH</shortName>
        <ecNumber evidence="1">3.1.1.22</ecNumber>
    </recommendedName>
</protein>
<organism>
    <name type="scientific">Burkholderia pseudomallei (strain 1106a)</name>
    <dbReference type="NCBI Taxonomy" id="357348"/>
    <lineage>
        <taxon>Bacteria</taxon>
        <taxon>Pseudomonadati</taxon>
        <taxon>Pseudomonadota</taxon>
        <taxon>Betaproteobacteria</taxon>
        <taxon>Burkholderiales</taxon>
        <taxon>Burkholderiaceae</taxon>
        <taxon>Burkholderia</taxon>
        <taxon>pseudomallei group</taxon>
    </lineage>
</organism>
<accession>A3NYK1</accession>
<name>HBOH_BURP0</name>
<keyword id="KW-0378">Hydrolase</keyword>
<keyword id="KW-0964">Secreted</keyword>
<keyword id="KW-0732">Signal</keyword>
<dbReference type="EC" id="3.1.1.22" evidence="1"/>
<dbReference type="EMBL" id="CP000572">
    <property type="protein sequence ID" value="ABN91667.1"/>
    <property type="molecule type" value="Genomic_DNA"/>
</dbReference>
<dbReference type="RefSeq" id="WP_004535338.1">
    <property type="nucleotide sequence ID" value="NC_009076.1"/>
</dbReference>
<dbReference type="ESTHER" id="burps-hboh">
    <property type="family name" value="OHBut_olig_hydro_put"/>
</dbReference>
<dbReference type="KEGG" id="bpl:BURPS1106A_3184"/>
<dbReference type="HOGENOM" id="CLU_420258_0_0_4"/>
<dbReference type="UniPathway" id="UPA00863"/>
<dbReference type="Proteomes" id="UP000006738">
    <property type="component" value="Chromosome I"/>
</dbReference>
<dbReference type="GO" id="GO:0005615">
    <property type="term" value="C:extracellular space"/>
    <property type="evidence" value="ECO:0007669"/>
    <property type="project" value="InterPro"/>
</dbReference>
<dbReference type="GO" id="GO:0047989">
    <property type="term" value="F:hydroxybutyrate-dimer hydrolase activity"/>
    <property type="evidence" value="ECO:0007669"/>
    <property type="project" value="UniProtKB-UniRule"/>
</dbReference>
<dbReference type="GO" id="GO:0019605">
    <property type="term" value="P:butyrate metabolic process"/>
    <property type="evidence" value="ECO:0007669"/>
    <property type="project" value="UniProtKB-UniRule"/>
</dbReference>
<dbReference type="HAMAP" id="MF_01906">
    <property type="entry name" value="3HBOH"/>
    <property type="match status" value="1"/>
</dbReference>
<dbReference type="InterPro" id="IPR029058">
    <property type="entry name" value="AB_hydrolase_fold"/>
</dbReference>
<dbReference type="InterPro" id="IPR016582">
    <property type="entry name" value="OHBut_olig_hydro_put"/>
</dbReference>
<dbReference type="Pfam" id="PF10605">
    <property type="entry name" value="3HBOH"/>
    <property type="match status" value="1"/>
</dbReference>
<dbReference type="PIRSF" id="PIRSF011409">
    <property type="entry name" value="HObutyrate_olig_hydrol"/>
    <property type="match status" value="1"/>
</dbReference>
<dbReference type="SUPFAM" id="SSF53474">
    <property type="entry name" value="alpha/beta-Hydrolases"/>
    <property type="match status" value="1"/>
</dbReference>
<comment type="function">
    <text evidence="1">Participates in the degradation of poly-3-hydroxybutyrate (PHB). It works downstream of poly(3-hydroxybutyrate) depolymerase, hydrolyzing D(-)-3-hydroxybutyrate oligomers of various length (3HB-oligomers) into 3HB-monomers.</text>
</comment>
<comment type="catalytic activity">
    <reaction evidence="1">
        <text>(3R)-hydroxybutanoate dimer + H2O = 2 (R)-3-hydroxybutanoate + H(+)</text>
        <dbReference type="Rhea" id="RHEA:10172"/>
        <dbReference type="ChEBI" id="CHEBI:10979"/>
        <dbReference type="ChEBI" id="CHEBI:10983"/>
        <dbReference type="ChEBI" id="CHEBI:15377"/>
        <dbReference type="ChEBI" id="CHEBI:15378"/>
        <dbReference type="EC" id="3.1.1.22"/>
    </reaction>
</comment>
<comment type="pathway">
    <text evidence="1">Lipid metabolism; butanoate metabolism.</text>
</comment>
<comment type="subcellular location">
    <subcellularLocation>
        <location evidence="1">Secreted</location>
    </subcellularLocation>
</comment>
<comment type="similarity">
    <text evidence="1">Belongs to the D-(-)-3-hydroxybutyrate oligomer hydrolase family.</text>
</comment>
<evidence type="ECO:0000255" key="1">
    <source>
        <dbReference type="HAMAP-Rule" id="MF_01906"/>
    </source>
</evidence>
<feature type="signal peptide" evidence="1">
    <location>
        <begin position="1"/>
        <end position="33"/>
    </location>
</feature>
<feature type="chain" id="PRO_0000314422" description="D-(-)-3-hydroxybutyrate oligomer hydrolase">
    <location>
        <begin position="34"/>
        <end position="699"/>
    </location>
</feature>
<feature type="active site" description="Charge relay system" evidence="1">
    <location>
        <position position="311"/>
    </location>
</feature>
<sequence length="699" mass="71648">MTAIRGGSRRAPGLALALLGGVLLGACHGDENAQVNALPGFVSGSVRKTAYDGASDDLLTAGLGKTGLGSDTRPGFANPAQPSAAELRRLAIYSNYRALVDITPNGGYGRFWGPNVDLAGNDTLGEGKIAGTEYLAYSDDGSGRKNVTLLVQVPASFDPANPCIVTATASGSRGVYGAIAAAGEWGLKRGCAVAYNDKGGGNGAHEIGTGVVTLIDGTLATASSAGSSSLFTASESSSTLAAFNSAFPNRYAYKHAHSQQNPEQDWGRVTLQAVEFAYWALNEQFGPVVDGTRHGIRYRPGDITTIAASVSNGGGSALAAAEQDTRGWITAVVVGEPQINVRMTPGVTVEQGGAPVPSFGRPLADYATLANLLQPCAAAAVAATGAPYLSALPMGVTQSIRTQRCATLAAAGLVSGADTASQASDALAQLHAAGYLADSDLLQAPMWDSQAMPAIAVTYANAYTRSRVTDNLCNFSFATTNPVTGAVAAPAVSPMTNLFGAGNGVPPTNGINLVFNGASGGVDHRLATPDASFAGAFCLRQLWAANQLGIGTNVDAVRVAANLQHKPAIIVHGRSDALVPVNHASRAYVAQNSATEGRASQLSFYEVTNGQHFDAFLSVPGFDTRFVPVHYYDEQALNLMWNHLKSGAPLPPSQVIRTVPRGGVPGAAPALSTANLPPIVQSPGANAIAVNAGVIDVPL</sequence>
<gene>
    <name type="ordered locus">BURPS1106A_3184</name>
</gene>
<reference key="1">
    <citation type="journal article" date="2010" name="Genome Biol. Evol.">
        <title>Continuing evolution of Burkholderia mallei through genome reduction and large-scale rearrangements.</title>
        <authorList>
            <person name="Losada L."/>
            <person name="Ronning C.M."/>
            <person name="DeShazer D."/>
            <person name="Woods D."/>
            <person name="Fedorova N."/>
            <person name="Kim H.S."/>
            <person name="Shabalina S.A."/>
            <person name="Pearson T.R."/>
            <person name="Brinkac L."/>
            <person name="Tan P."/>
            <person name="Nandi T."/>
            <person name="Crabtree J."/>
            <person name="Badger J."/>
            <person name="Beckstrom-Sternberg S."/>
            <person name="Saqib M."/>
            <person name="Schutzer S.E."/>
            <person name="Keim P."/>
            <person name="Nierman W.C."/>
        </authorList>
    </citation>
    <scope>NUCLEOTIDE SEQUENCE [LARGE SCALE GENOMIC DNA]</scope>
    <source>
        <strain>1106a</strain>
    </source>
</reference>
<proteinExistence type="inferred from homology"/>